<dbReference type="EC" id="5.3.1.14" evidence="1"/>
<dbReference type="EMBL" id="AE017262">
    <property type="protein sequence ID" value="AAT05602.1"/>
    <property type="molecule type" value="Genomic_DNA"/>
</dbReference>
<dbReference type="RefSeq" id="WP_003727577.1">
    <property type="nucleotide sequence ID" value="NC_002973.6"/>
</dbReference>
<dbReference type="SMR" id="Q71VR4"/>
<dbReference type="KEGG" id="lmf:LMOf2365_2838"/>
<dbReference type="HOGENOM" id="CLU_052790_0_0_9"/>
<dbReference type="UniPathway" id="UPA00541">
    <property type="reaction ID" value="UER00601"/>
</dbReference>
<dbReference type="GO" id="GO:0005737">
    <property type="term" value="C:cytoplasm"/>
    <property type="evidence" value="ECO:0007669"/>
    <property type="project" value="UniProtKB-SubCell"/>
</dbReference>
<dbReference type="GO" id="GO:0008740">
    <property type="term" value="F:L-rhamnose isomerase activity"/>
    <property type="evidence" value="ECO:0007669"/>
    <property type="project" value="UniProtKB-UniRule"/>
</dbReference>
<dbReference type="GO" id="GO:0030145">
    <property type="term" value="F:manganese ion binding"/>
    <property type="evidence" value="ECO:0007669"/>
    <property type="project" value="UniProtKB-UniRule"/>
</dbReference>
<dbReference type="GO" id="GO:0019324">
    <property type="term" value="P:L-lyxose metabolic process"/>
    <property type="evidence" value="ECO:0007669"/>
    <property type="project" value="TreeGrafter"/>
</dbReference>
<dbReference type="GO" id="GO:0019301">
    <property type="term" value="P:rhamnose catabolic process"/>
    <property type="evidence" value="ECO:0007669"/>
    <property type="project" value="UniProtKB-UniRule"/>
</dbReference>
<dbReference type="FunFam" id="3.20.20.150:FF:000006">
    <property type="entry name" value="L-rhamnose isomerase"/>
    <property type="match status" value="1"/>
</dbReference>
<dbReference type="Gene3D" id="3.20.20.150">
    <property type="entry name" value="Divalent-metal-dependent TIM barrel enzymes"/>
    <property type="match status" value="1"/>
</dbReference>
<dbReference type="HAMAP" id="MF_00541">
    <property type="entry name" value="RhaA"/>
    <property type="match status" value="1"/>
</dbReference>
<dbReference type="InterPro" id="IPR050337">
    <property type="entry name" value="L-rhamnose_isomerase"/>
</dbReference>
<dbReference type="InterPro" id="IPR009308">
    <property type="entry name" value="Rhamnose_isomerase"/>
</dbReference>
<dbReference type="InterPro" id="IPR036237">
    <property type="entry name" value="Xyl_isomerase-like_sf"/>
</dbReference>
<dbReference type="NCBIfam" id="NF002203">
    <property type="entry name" value="PRK01076.1"/>
    <property type="match status" value="1"/>
</dbReference>
<dbReference type="NCBIfam" id="TIGR01748">
    <property type="entry name" value="rhaA"/>
    <property type="match status" value="1"/>
</dbReference>
<dbReference type="PANTHER" id="PTHR30268">
    <property type="entry name" value="L-RHAMNOSE ISOMERASE"/>
    <property type="match status" value="1"/>
</dbReference>
<dbReference type="PANTHER" id="PTHR30268:SF0">
    <property type="entry name" value="L-RHAMNOSE ISOMERASE"/>
    <property type="match status" value="1"/>
</dbReference>
<dbReference type="Pfam" id="PF06134">
    <property type="entry name" value="RhaA"/>
    <property type="match status" value="1"/>
</dbReference>
<dbReference type="SUPFAM" id="SSF51658">
    <property type="entry name" value="Xylose isomerase-like"/>
    <property type="match status" value="1"/>
</dbReference>
<accession>Q71VR4</accession>
<protein>
    <recommendedName>
        <fullName evidence="1">L-rhamnose isomerase</fullName>
        <ecNumber evidence="1">5.3.1.14</ecNumber>
    </recommendedName>
</protein>
<gene>
    <name evidence="1" type="primary">rhaA</name>
    <name type="ordered locus">LMOf2365_2838</name>
</gene>
<comment type="function">
    <text evidence="1">Catalyzes the interconversion of L-rhamnose and L-rhamnulose.</text>
</comment>
<comment type="catalytic activity">
    <reaction evidence="1">
        <text>L-rhamnopyranose = L-rhamnulose</text>
        <dbReference type="Rhea" id="RHEA:23160"/>
        <dbReference type="ChEBI" id="CHEBI:17897"/>
        <dbReference type="ChEBI" id="CHEBI:62346"/>
        <dbReference type="EC" id="5.3.1.14"/>
    </reaction>
</comment>
<comment type="cofactor">
    <cofactor evidence="1">
        <name>Mn(2+)</name>
        <dbReference type="ChEBI" id="CHEBI:29035"/>
    </cofactor>
    <text evidence="1">Binds 1 Mn(2+) ion per subunit.</text>
</comment>
<comment type="pathway">
    <text evidence="1">Carbohydrate degradation; L-rhamnose degradation; glycerone phosphate from L-rhamnose: step 1/3.</text>
</comment>
<comment type="subcellular location">
    <subcellularLocation>
        <location evidence="1">Cytoplasm</location>
    </subcellularLocation>
</comment>
<comment type="similarity">
    <text evidence="1">Belongs to the rhamnose isomerase family.</text>
</comment>
<sequence>MGHETEISKRYQVAKERYQAIGVDTENALKTLKDIKISMHCWQGDDVKGFLNPDGELTGGIMATGNYPGAAHTPKQLRQDLEKAYSLIPGKHKLNLHAIYVDTDEKVDLNEIEPKHFTPWVEWAKEQGLGLDFNPTFFSHPMFKDNYTLASPDKEVRDFWIEHGKRSRKISEYFGKELGQTSINNFWVPDGIKDCPIDRYTPRKRLMEALDEVFAEKLDEKYTQEAVESKLFGLGAEAYTVGSHEFYMGYGITRDKLICLDAGHFHPTEVISNKLSSLALFSKGVMLHVSRPVRWDSDHVVIMDDELIEIGRELVRNDLLGITNIGLDFFDATINRIAAWVVGTRNTQKSLLKALLEPTADLKKMELENDFTSRMAITEELKDFPFGDVWNYFCEINGVPVGLDWLKEVKAYEEDVLLKR</sequence>
<evidence type="ECO:0000255" key="1">
    <source>
        <dbReference type="HAMAP-Rule" id="MF_00541"/>
    </source>
</evidence>
<name>RHAA_LISMF</name>
<feature type="chain" id="PRO_0000090559" description="L-rhamnose isomerase">
    <location>
        <begin position="1"/>
        <end position="420"/>
    </location>
</feature>
<feature type="binding site" evidence="1">
    <location>
        <position position="264"/>
    </location>
    <ligand>
        <name>Mn(2+)</name>
        <dbReference type="ChEBI" id="CHEBI:29035"/>
    </ligand>
</feature>
<feature type="binding site" evidence="1">
    <location>
        <position position="296"/>
    </location>
    <ligand>
        <name>Mn(2+)</name>
        <dbReference type="ChEBI" id="CHEBI:29035"/>
    </ligand>
</feature>
<feature type="binding site" evidence="1">
    <location>
        <position position="298"/>
    </location>
    <ligand>
        <name>Mn(2+)</name>
        <dbReference type="ChEBI" id="CHEBI:29035"/>
    </ligand>
</feature>
<keyword id="KW-0963">Cytoplasm</keyword>
<keyword id="KW-0413">Isomerase</keyword>
<keyword id="KW-0464">Manganese</keyword>
<keyword id="KW-0479">Metal-binding</keyword>
<keyword id="KW-0684">Rhamnose metabolism</keyword>
<proteinExistence type="inferred from homology"/>
<reference key="1">
    <citation type="journal article" date="2004" name="Nucleic Acids Res.">
        <title>Whole genome comparisons of serotype 4b and 1/2a strains of the food-borne pathogen Listeria monocytogenes reveal new insights into the core genome components of this species.</title>
        <authorList>
            <person name="Nelson K.E."/>
            <person name="Fouts D.E."/>
            <person name="Mongodin E.F."/>
            <person name="Ravel J."/>
            <person name="DeBoy R.T."/>
            <person name="Kolonay J.F."/>
            <person name="Rasko D.A."/>
            <person name="Angiuoli S.V."/>
            <person name="Gill S.R."/>
            <person name="Paulsen I.T."/>
            <person name="Peterson J.D."/>
            <person name="White O."/>
            <person name="Nelson W.C."/>
            <person name="Nierman W.C."/>
            <person name="Beanan M.J."/>
            <person name="Brinkac L.M."/>
            <person name="Daugherty S.C."/>
            <person name="Dodson R.J."/>
            <person name="Durkin A.S."/>
            <person name="Madupu R."/>
            <person name="Haft D.H."/>
            <person name="Selengut J."/>
            <person name="Van Aken S.E."/>
            <person name="Khouri H.M."/>
            <person name="Fedorova N."/>
            <person name="Forberger H.A."/>
            <person name="Tran B."/>
            <person name="Kathariou S."/>
            <person name="Wonderling L.D."/>
            <person name="Uhlich G.A."/>
            <person name="Bayles D.O."/>
            <person name="Luchansky J.B."/>
            <person name="Fraser C.M."/>
        </authorList>
    </citation>
    <scope>NUCLEOTIDE SEQUENCE [LARGE SCALE GENOMIC DNA]</scope>
    <source>
        <strain>F2365</strain>
    </source>
</reference>
<organism>
    <name type="scientific">Listeria monocytogenes serotype 4b (strain F2365)</name>
    <dbReference type="NCBI Taxonomy" id="265669"/>
    <lineage>
        <taxon>Bacteria</taxon>
        <taxon>Bacillati</taxon>
        <taxon>Bacillota</taxon>
        <taxon>Bacilli</taxon>
        <taxon>Bacillales</taxon>
        <taxon>Listeriaceae</taxon>
        <taxon>Listeria</taxon>
    </lineage>
</organism>